<feature type="chain" id="PRO_0000097246" description="mRNA interferase RelE">
    <location>
        <begin position="1"/>
        <end position="95"/>
    </location>
</feature>
<sequence>MAYFLDFDERALKEWRKLGSTVREQLKKKLVEVLESPRIEANKLRGMPDCYKIKLRSSGYRLVYQVIDEKVVVFVISVGKRERSEVYSEAVKRIL</sequence>
<dbReference type="EC" id="3.1.-.-"/>
<dbReference type="EMBL" id="AE005674">
    <property type="protein sequence ID" value="AAN43137.1"/>
    <property type="molecule type" value="Genomic_DNA"/>
</dbReference>
<dbReference type="EMBL" id="AE014073">
    <property type="protein sequence ID" value="AAP17028.1"/>
    <property type="molecule type" value="Genomic_DNA"/>
</dbReference>
<dbReference type="RefSeq" id="NP_707430.1">
    <property type="nucleotide sequence ID" value="NC_004337.2"/>
</dbReference>
<dbReference type="RefSeq" id="WP_000323025.1">
    <property type="nucleotide sequence ID" value="NZ_WPGV01000221.1"/>
</dbReference>
<dbReference type="BMRB" id="P0C078"/>
<dbReference type="SMR" id="P0C078"/>
<dbReference type="STRING" id="198214.SF1548"/>
<dbReference type="PaxDb" id="198214-SF1548"/>
<dbReference type="GeneID" id="1024736"/>
<dbReference type="KEGG" id="sfl:SF1548"/>
<dbReference type="KEGG" id="sfx:S1669"/>
<dbReference type="PATRIC" id="fig|198214.7.peg.1830"/>
<dbReference type="HOGENOM" id="CLU_155761_0_1_6"/>
<dbReference type="Proteomes" id="UP000001006">
    <property type="component" value="Chromosome"/>
</dbReference>
<dbReference type="Proteomes" id="UP000002673">
    <property type="component" value="Chromosome"/>
</dbReference>
<dbReference type="GO" id="GO:0004519">
    <property type="term" value="F:endonuclease activity"/>
    <property type="evidence" value="ECO:0007669"/>
    <property type="project" value="UniProtKB-KW"/>
</dbReference>
<dbReference type="GO" id="GO:0019843">
    <property type="term" value="F:rRNA binding"/>
    <property type="evidence" value="ECO:0007669"/>
    <property type="project" value="UniProtKB-KW"/>
</dbReference>
<dbReference type="FunFam" id="3.30.2310.20:FF:000002">
    <property type="entry name" value="mRNA interferase toxin RelE"/>
    <property type="match status" value="1"/>
</dbReference>
<dbReference type="Gene3D" id="3.30.2310.20">
    <property type="entry name" value="RelE-like"/>
    <property type="match status" value="1"/>
</dbReference>
<dbReference type="InterPro" id="IPR007712">
    <property type="entry name" value="RelE/ParE_toxin"/>
</dbReference>
<dbReference type="InterPro" id="IPR035093">
    <property type="entry name" value="RelE/ParE_toxin_dom_sf"/>
</dbReference>
<dbReference type="NCBIfam" id="TIGR02385">
    <property type="entry name" value="RelE_StbE"/>
    <property type="match status" value="1"/>
</dbReference>
<dbReference type="PANTHER" id="PTHR35601:SF2">
    <property type="entry name" value="MRNA INTERFERASE TOXIN RELE"/>
    <property type="match status" value="1"/>
</dbReference>
<dbReference type="PANTHER" id="PTHR35601">
    <property type="entry name" value="TOXIN RELE"/>
    <property type="match status" value="1"/>
</dbReference>
<dbReference type="Pfam" id="PF05016">
    <property type="entry name" value="ParE_toxin"/>
    <property type="match status" value="1"/>
</dbReference>
<dbReference type="SUPFAM" id="SSF143011">
    <property type="entry name" value="RelE-like"/>
    <property type="match status" value="1"/>
</dbReference>
<gene>
    <name type="primary">relE</name>
    <name type="synonym">relE1</name>
    <name type="ordered locus">SF1548</name>
    <name type="ordered locus">S1669</name>
</gene>
<evidence type="ECO:0000250" key="1"/>
<evidence type="ECO:0000305" key="2"/>
<keyword id="KW-0255">Endonuclease</keyword>
<keyword id="KW-0378">Hydrolase</keyword>
<keyword id="KW-0540">Nuclease</keyword>
<keyword id="KW-1185">Reference proteome</keyword>
<keyword id="KW-0678">Repressor</keyword>
<keyword id="KW-0694">RNA-binding</keyword>
<keyword id="KW-0699">rRNA-binding</keyword>
<keyword id="KW-0346">Stress response</keyword>
<keyword id="KW-1277">Toxin-antitoxin system</keyword>
<keyword id="KW-0804">Transcription</keyword>
<keyword id="KW-0805">Transcription regulation</keyword>
<name>RELE_SHIFL</name>
<reference key="1">
    <citation type="journal article" date="2002" name="Nucleic Acids Res.">
        <title>Genome sequence of Shigella flexneri 2a: insights into pathogenicity through comparison with genomes of Escherichia coli K12 and O157.</title>
        <authorList>
            <person name="Jin Q."/>
            <person name="Yuan Z."/>
            <person name="Xu J."/>
            <person name="Wang Y."/>
            <person name="Shen Y."/>
            <person name="Lu W."/>
            <person name="Wang J."/>
            <person name="Liu H."/>
            <person name="Yang J."/>
            <person name="Yang F."/>
            <person name="Zhang X."/>
            <person name="Zhang J."/>
            <person name="Yang G."/>
            <person name="Wu H."/>
            <person name="Qu D."/>
            <person name="Dong J."/>
            <person name="Sun L."/>
            <person name="Xue Y."/>
            <person name="Zhao A."/>
            <person name="Gao Y."/>
            <person name="Zhu J."/>
            <person name="Kan B."/>
            <person name="Ding K."/>
            <person name="Chen S."/>
            <person name="Cheng H."/>
            <person name="Yao Z."/>
            <person name="He B."/>
            <person name="Chen R."/>
            <person name="Ma D."/>
            <person name="Qiang B."/>
            <person name="Wen Y."/>
            <person name="Hou Y."/>
            <person name="Yu J."/>
        </authorList>
    </citation>
    <scope>NUCLEOTIDE SEQUENCE [LARGE SCALE GENOMIC DNA]</scope>
    <source>
        <strain>301 / Serotype 2a</strain>
    </source>
</reference>
<reference key="2">
    <citation type="journal article" date="2003" name="Infect. Immun.">
        <title>Complete genome sequence and comparative genomics of Shigella flexneri serotype 2a strain 2457T.</title>
        <authorList>
            <person name="Wei J."/>
            <person name="Goldberg M.B."/>
            <person name="Burland V."/>
            <person name="Venkatesan M.M."/>
            <person name="Deng W."/>
            <person name="Fournier G."/>
            <person name="Mayhew G.F."/>
            <person name="Plunkett G. III"/>
            <person name="Rose D.J."/>
            <person name="Darling A."/>
            <person name="Mau B."/>
            <person name="Perna N.T."/>
            <person name="Payne S.M."/>
            <person name="Runyen-Janecky L.J."/>
            <person name="Zhou S."/>
            <person name="Schwartz D.C."/>
            <person name="Blattner F.R."/>
        </authorList>
    </citation>
    <scope>NUCLEOTIDE SEQUENCE [LARGE SCALE GENOMIC DNA]</scope>
    <source>
        <strain>ATCC 700930 / 2457T / Serotype 2a</strain>
    </source>
</reference>
<reference key="3">
    <citation type="journal article" date="2005" name="Nucleic Acids Res.">
        <title>Toxin-antitoxin loci are highly abundant in free-living but lost from host-associated prokaryotes.</title>
        <authorList>
            <person name="Pandey D.P."/>
            <person name="Gerdes K."/>
        </authorList>
    </citation>
    <scope>POSSIBLE FUNCTION</scope>
    <source>
        <strain>301 / Serotype 2a</strain>
        <strain>ATCC 700930 / 2457T / Serotype 2a</strain>
    </source>
</reference>
<organism>
    <name type="scientific">Shigella flexneri</name>
    <dbReference type="NCBI Taxonomy" id="623"/>
    <lineage>
        <taxon>Bacteria</taxon>
        <taxon>Pseudomonadati</taxon>
        <taxon>Pseudomonadota</taxon>
        <taxon>Gammaproteobacteria</taxon>
        <taxon>Enterobacterales</taxon>
        <taxon>Enterobacteriaceae</taxon>
        <taxon>Shigella</taxon>
    </lineage>
</organism>
<protein>
    <recommendedName>
        <fullName>mRNA interferase RelE</fullName>
        <ecNumber>3.1.-.-</ecNumber>
    </recommendedName>
    <alternativeName>
        <fullName>Endoribonuclease RelE</fullName>
    </alternativeName>
    <alternativeName>
        <fullName>Toxin RelE</fullName>
    </alternativeName>
</protein>
<accession>P0C078</accession>
<accession>P07008</accession>
<proteinExistence type="inferred from homology"/>
<comment type="function">
    <text evidence="1">Toxic component of a type II toxin-antitoxin (TA) system. A sequence-specific, ribosome-dependent mRNA endoribonuclease that inhibits translation during amino acid starvation (the stringent response). Acts by cleaving mRNA with high codon specificity in the ribosomal A site between positions 2 and 3. Acts with RelB as a corepressor of relBE transcription (By similarity).</text>
</comment>
<comment type="subunit">
    <text evidence="1">Binds DNA as a RelE(2)-RelB(2) heterotetramer. RelE occupies the A site of the 70S ribosome. RelB inhibits its endonuclease activity (By similarity).</text>
</comment>
<comment type="similarity">
    <text evidence="2">Belongs to the RelE toxin family.</text>
</comment>